<gene>
    <name type="primary">COF1</name>
    <name type="ORF">UMAG_04314</name>
</gene>
<evidence type="ECO:0000250" key="1"/>
<evidence type="ECO:0000255" key="2">
    <source>
        <dbReference type="PROSITE-ProRule" id="PRU00599"/>
    </source>
</evidence>
<evidence type="ECO:0000305" key="3"/>
<feature type="chain" id="PRO_0000255628" description="Cofilin">
    <location>
        <begin position="1"/>
        <end position="139"/>
    </location>
</feature>
<feature type="domain" description="ADF-H" evidence="2">
    <location>
        <begin position="4"/>
        <end position="135"/>
    </location>
</feature>
<accession>Q4P6E9</accession>
<accession>A0A0D1BZQ8</accession>
<comment type="function">
    <text evidence="1">Controls reversibly actin polymerization and depolymerization in a pH-sensitive manner. It has the ability to bind G- and F-actin in a 1:1 ratio of cofilin to actin. Binding to F-actin is regulated by tropomyosin. It is the major component of intranuclear and cytoplasmic actin rods. Required for accumulation of actin at the cell division site via depolymerizing actin at the cell ends. In association with myosin II has a role in the assembly of the contractile ring via severing actin filaments. Involved in the maintenance of the contractile ring once formed. In association with profilin and capping protein, has a role in the mitotic reorganization of the actin cytoskeleton (By similarity).</text>
</comment>
<comment type="subcellular location">
    <subcellularLocation>
        <location evidence="1">Cytoplasm</location>
    </subcellularLocation>
    <subcellularLocation>
        <location evidence="1">Cytoplasm</location>
        <location evidence="1">Cytoskeleton</location>
    </subcellularLocation>
    <subcellularLocation>
        <location evidence="1">Nucleus matrix</location>
    </subcellularLocation>
    <text evidence="1">Throughout the cytoplasm (but not on the cytoplasmic cables) and major component of the cortical actin cytoskeleton.</text>
</comment>
<comment type="similarity">
    <text evidence="3">Belongs to the actin-binding proteins ADF family.</text>
</comment>
<proteinExistence type="inferred from homology"/>
<organism>
    <name type="scientific">Mycosarcoma maydis</name>
    <name type="common">Corn smut fungus</name>
    <name type="synonym">Ustilago maydis</name>
    <dbReference type="NCBI Taxonomy" id="5270"/>
    <lineage>
        <taxon>Eukaryota</taxon>
        <taxon>Fungi</taxon>
        <taxon>Dikarya</taxon>
        <taxon>Basidiomycota</taxon>
        <taxon>Ustilaginomycotina</taxon>
        <taxon>Ustilaginomycetes</taxon>
        <taxon>Ustilaginales</taxon>
        <taxon>Ustilaginaceae</taxon>
        <taxon>Mycosarcoma</taxon>
    </lineage>
</organism>
<reference key="1">
    <citation type="journal article" date="2006" name="Nature">
        <title>Insights from the genome of the biotrophic fungal plant pathogen Ustilago maydis.</title>
        <authorList>
            <person name="Kaemper J."/>
            <person name="Kahmann R."/>
            <person name="Boelker M."/>
            <person name="Ma L.-J."/>
            <person name="Brefort T."/>
            <person name="Saville B.J."/>
            <person name="Banuett F."/>
            <person name="Kronstad J.W."/>
            <person name="Gold S.E."/>
            <person name="Mueller O."/>
            <person name="Perlin M.H."/>
            <person name="Woesten H.A.B."/>
            <person name="de Vries R."/>
            <person name="Ruiz-Herrera J."/>
            <person name="Reynaga-Pena C.G."/>
            <person name="Snetselaar K."/>
            <person name="McCann M."/>
            <person name="Perez-Martin J."/>
            <person name="Feldbruegge M."/>
            <person name="Basse C.W."/>
            <person name="Steinberg G."/>
            <person name="Ibeas J.I."/>
            <person name="Holloman W."/>
            <person name="Guzman P."/>
            <person name="Farman M.L."/>
            <person name="Stajich J.E."/>
            <person name="Sentandreu R."/>
            <person name="Gonzalez-Prieto J.M."/>
            <person name="Kennell J.C."/>
            <person name="Molina L."/>
            <person name="Schirawski J."/>
            <person name="Mendoza-Mendoza A."/>
            <person name="Greilinger D."/>
            <person name="Muench K."/>
            <person name="Roessel N."/>
            <person name="Scherer M."/>
            <person name="Vranes M."/>
            <person name="Ladendorf O."/>
            <person name="Vincon V."/>
            <person name="Fuchs U."/>
            <person name="Sandrock B."/>
            <person name="Meng S."/>
            <person name="Ho E.C.H."/>
            <person name="Cahill M.J."/>
            <person name="Boyce K.J."/>
            <person name="Klose J."/>
            <person name="Klosterman S.J."/>
            <person name="Deelstra H.J."/>
            <person name="Ortiz-Castellanos L."/>
            <person name="Li W."/>
            <person name="Sanchez-Alonso P."/>
            <person name="Schreier P.H."/>
            <person name="Haeuser-Hahn I."/>
            <person name="Vaupel M."/>
            <person name="Koopmann E."/>
            <person name="Friedrich G."/>
            <person name="Voss H."/>
            <person name="Schlueter T."/>
            <person name="Margolis J."/>
            <person name="Platt D."/>
            <person name="Swimmer C."/>
            <person name="Gnirke A."/>
            <person name="Chen F."/>
            <person name="Vysotskaia V."/>
            <person name="Mannhaupt G."/>
            <person name="Gueldener U."/>
            <person name="Muensterkoetter M."/>
            <person name="Haase D."/>
            <person name="Oesterheld M."/>
            <person name="Mewes H.-W."/>
            <person name="Mauceli E.W."/>
            <person name="DeCaprio D."/>
            <person name="Wade C.M."/>
            <person name="Butler J."/>
            <person name="Young S.K."/>
            <person name="Jaffe D.B."/>
            <person name="Calvo S.E."/>
            <person name="Nusbaum C."/>
            <person name="Galagan J.E."/>
            <person name="Birren B.W."/>
        </authorList>
    </citation>
    <scope>NUCLEOTIDE SEQUENCE [LARGE SCALE GENOMIC DNA]</scope>
    <source>
        <strain>DSM 14603 / FGSC 9021 / UM521</strain>
    </source>
</reference>
<reference key="2">
    <citation type="submission" date="2014-09" db="EMBL/GenBank/DDBJ databases">
        <authorList>
            <person name="Gueldener U."/>
            <person name="Muensterkoetter M."/>
            <person name="Walter M.C."/>
            <person name="Mannhaupt G."/>
            <person name="Kahmann R."/>
        </authorList>
    </citation>
    <scope>GENOME REANNOTATION</scope>
    <source>
        <strain>DSM 14603 / FGSC 9021 / UM521</strain>
    </source>
</reference>
<keyword id="KW-0009">Actin-binding</keyword>
<keyword id="KW-0131">Cell cycle</keyword>
<keyword id="KW-0132">Cell division</keyword>
<keyword id="KW-0963">Cytoplasm</keyword>
<keyword id="KW-0206">Cytoskeleton</keyword>
<keyword id="KW-0539">Nucleus</keyword>
<keyword id="KW-1185">Reference proteome</keyword>
<protein>
    <recommendedName>
        <fullName>Cofilin</fullName>
    </recommendedName>
    <alternativeName>
        <fullName>Actin-depolymerizing factor 1</fullName>
    </alternativeName>
</protein>
<dbReference type="EMBL" id="CM003153">
    <property type="protein sequence ID" value="KIS67207.1"/>
    <property type="molecule type" value="Genomic_DNA"/>
</dbReference>
<dbReference type="RefSeq" id="XP_011391036.1">
    <property type="nucleotide sequence ID" value="XM_011392734.1"/>
</dbReference>
<dbReference type="SMR" id="Q4P6E9"/>
<dbReference type="FunCoup" id="Q4P6E9">
    <property type="interactions" value="132"/>
</dbReference>
<dbReference type="STRING" id="237631.Q4P6E9"/>
<dbReference type="EnsemblFungi" id="KIS67207">
    <property type="protein sequence ID" value="KIS67207"/>
    <property type="gene ID" value="UMAG_04314"/>
</dbReference>
<dbReference type="GeneID" id="23564535"/>
<dbReference type="KEGG" id="uma:UMAG_04314"/>
<dbReference type="VEuPathDB" id="FungiDB:UMAG_04314"/>
<dbReference type="eggNOG" id="KOG1735">
    <property type="taxonomic scope" value="Eukaryota"/>
</dbReference>
<dbReference type="HOGENOM" id="CLU_094004_3_2_1"/>
<dbReference type="InParanoid" id="Q4P6E9"/>
<dbReference type="OMA" id="ITFYSWS"/>
<dbReference type="OrthoDB" id="10249245at2759"/>
<dbReference type="Proteomes" id="UP000000561">
    <property type="component" value="Chromosome 14"/>
</dbReference>
<dbReference type="GO" id="GO:0030479">
    <property type="term" value="C:actin cortical patch"/>
    <property type="evidence" value="ECO:0000318"/>
    <property type="project" value="GO_Central"/>
</dbReference>
<dbReference type="GO" id="GO:0015629">
    <property type="term" value="C:actin cytoskeleton"/>
    <property type="evidence" value="ECO:0000318"/>
    <property type="project" value="GO_Central"/>
</dbReference>
<dbReference type="GO" id="GO:0005737">
    <property type="term" value="C:cytoplasm"/>
    <property type="evidence" value="ECO:0000318"/>
    <property type="project" value="GO_Central"/>
</dbReference>
<dbReference type="GO" id="GO:0016363">
    <property type="term" value="C:nuclear matrix"/>
    <property type="evidence" value="ECO:0007669"/>
    <property type="project" value="UniProtKB-SubCell"/>
</dbReference>
<dbReference type="GO" id="GO:0051015">
    <property type="term" value="F:actin filament binding"/>
    <property type="evidence" value="ECO:0000318"/>
    <property type="project" value="GO_Central"/>
</dbReference>
<dbReference type="GO" id="GO:0030042">
    <property type="term" value="P:actin filament depolymerization"/>
    <property type="evidence" value="ECO:0000318"/>
    <property type="project" value="GO_Central"/>
</dbReference>
<dbReference type="GO" id="GO:0051014">
    <property type="term" value="P:actin filament severing"/>
    <property type="evidence" value="ECO:0000318"/>
    <property type="project" value="GO_Central"/>
</dbReference>
<dbReference type="GO" id="GO:0051301">
    <property type="term" value="P:cell division"/>
    <property type="evidence" value="ECO:0007669"/>
    <property type="project" value="UniProtKB-KW"/>
</dbReference>
<dbReference type="CDD" id="cd11286">
    <property type="entry name" value="ADF_cofilin_like"/>
    <property type="match status" value="1"/>
</dbReference>
<dbReference type="Gene3D" id="3.40.20.10">
    <property type="entry name" value="Severin"/>
    <property type="match status" value="1"/>
</dbReference>
<dbReference type="InterPro" id="IPR002108">
    <property type="entry name" value="ADF-H"/>
</dbReference>
<dbReference type="InterPro" id="IPR029006">
    <property type="entry name" value="ADF-H/Gelsolin-like_dom_sf"/>
</dbReference>
<dbReference type="InterPro" id="IPR017904">
    <property type="entry name" value="ADF/Cofilin"/>
</dbReference>
<dbReference type="PANTHER" id="PTHR11913">
    <property type="entry name" value="COFILIN-RELATED"/>
    <property type="match status" value="1"/>
</dbReference>
<dbReference type="Pfam" id="PF00241">
    <property type="entry name" value="Cofilin_ADF"/>
    <property type="match status" value="1"/>
</dbReference>
<dbReference type="SMART" id="SM00102">
    <property type="entry name" value="ADF"/>
    <property type="match status" value="1"/>
</dbReference>
<dbReference type="SUPFAM" id="SSF55753">
    <property type="entry name" value="Actin depolymerizing proteins"/>
    <property type="match status" value="1"/>
</dbReference>
<dbReference type="PROSITE" id="PS51263">
    <property type="entry name" value="ADF_H"/>
    <property type="match status" value="1"/>
</dbReference>
<sequence length="139" mass="15744">MSSGVKVSQECLDKFQELKLGKKIKYIIYSLNDKNTEIVVQNTSTSTSYDDFLAELPPTECRYAIYDFEYEKGDAGKRNKICFFSWSPDDAKIKPKMVFASSKDALRKALVGISTEIQGTDFSEVSYDTVLDKVSRSTF</sequence>
<name>COFI_MYCMD</name>